<gene>
    <name type="primary">yotG</name>
    <name type="ordered locus">BSU19890</name>
</gene>
<dbReference type="EMBL" id="AL009126">
    <property type="protein sequence ID" value="CAB13880.1"/>
    <property type="molecule type" value="Genomic_DNA"/>
</dbReference>
<dbReference type="RefSeq" id="NP_389870.1">
    <property type="nucleotide sequence ID" value="NC_000964.3"/>
</dbReference>
<dbReference type="RefSeq" id="WP_010886535.1">
    <property type="nucleotide sequence ID" value="NZ_OZ025638.1"/>
</dbReference>
<dbReference type="SMR" id="O31868"/>
<dbReference type="FunCoup" id="O31868">
    <property type="interactions" value="42"/>
</dbReference>
<dbReference type="STRING" id="224308.BSU19890"/>
<dbReference type="PaxDb" id="224308-BSU19890"/>
<dbReference type="EnsemblBacteria" id="CAB13880">
    <property type="protein sequence ID" value="CAB13880"/>
    <property type="gene ID" value="BSU_19890"/>
</dbReference>
<dbReference type="GeneID" id="940082"/>
<dbReference type="KEGG" id="bsu:BSU19890"/>
<dbReference type="PATRIC" id="fig|224308.43.peg.2109"/>
<dbReference type="InParanoid" id="O31868"/>
<dbReference type="OrthoDB" id="2891542at2"/>
<dbReference type="BioCyc" id="BSUB:BSU19890-MONOMER"/>
<dbReference type="Proteomes" id="UP000001570">
    <property type="component" value="Chromosome"/>
</dbReference>
<name>YOTG_BACSU</name>
<proteinExistence type="predicted"/>
<keyword id="KW-1185">Reference proteome</keyword>
<feature type="chain" id="PRO_0000360069" description="Uncharacterized SPbeta prophage-derived protein YotG">
    <location>
        <begin position="1"/>
        <end position="105"/>
    </location>
</feature>
<organism>
    <name type="scientific">Bacillus subtilis (strain 168)</name>
    <dbReference type="NCBI Taxonomy" id="224308"/>
    <lineage>
        <taxon>Bacteria</taxon>
        <taxon>Bacillati</taxon>
        <taxon>Bacillota</taxon>
        <taxon>Bacilli</taxon>
        <taxon>Bacillales</taxon>
        <taxon>Bacillaceae</taxon>
        <taxon>Bacillus</taxon>
    </lineage>
</organism>
<protein>
    <recommendedName>
        <fullName>Uncharacterized SPbeta prophage-derived protein YotG</fullName>
    </recommendedName>
</protein>
<sequence>MKESLMIYFNIENSSDIHEFLKIAVAKNDVDYPFLEWIKEKGIPRLKNIDFNKLPNDDRFLAMIEFDEFVLQNEMDFEDPEEVRGCIISTVNSLKEYINICHNKT</sequence>
<accession>O31868</accession>
<reference key="1">
    <citation type="journal article" date="1997" name="Nature">
        <title>The complete genome sequence of the Gram-positive bacterium Bacillus subtilis.</title>
        <authorList>
            <person name="Kunst F."/>
            <person name="Ogasawara N."/>
            <person name="Moszer I."/>
            <person name="Albertini A.M."/>
            <person name="Alloni G."/>
            <person name="Azevedo V."/>
            <person name="Bertero M.G."/>
            <person name="Bessieres P."/>
            <person name="Bolotin A."/>
            <person name="Borchert S."/>
            <person name="Borriss R."/>
            <person name="Boursier L."/>
            <person name="Brans A."/>
            <person name="Braun M."/>
            <person name="Brignell S.C."/>
            <person name="Bron S."/>
            <person name="Brouillet S."/>
            <person name="Bruschi C.V."/>
            <person name="Caldwell B."/>
            <person name="Capuano V."/>
            <person name="Carter N.M."/>
            <person name="Choi S.-K."/>
            <person name="Codani J.-J."/>
            <person name="Connerton I.F."/>
            <person name="Cummings N.J."/>
            <person name="Daniel R.A."/>
            <person name="Denizot F."/>
            <person name="Devine K.M."/>
            <person name="Duesterhoeft A."/>
            <person name="Ehrlich S.D."/>
            <person name="Emmerson P.T."/>
            <person name="Entian K.-D."/>
            <person name="Errington J."/>
            <person name="Fabret C."/>
            <person name="Ferrari E."/>
            <person name="Foulger D."/>
            <person name="Fritz C."/>
            <person name="Fujita M."/>
            <person name="Fujita Y."/>
            <person name="Fuma S."/>
            <person name="Galizzi A."/>
            <person name="Galleron N."/>
            <person name="Ghim S.-Y."/>
            <person name="Glaser P."/>
            <person name="Goffeau A."/>
            <person name="Golightly E.J."/>
            <person name="Grandi G."/>
            <person name="Guiseppi G."/>
            <person name="Guy B.J."/>
            <person name="Haga K."/>
            <person name="Haiech J."/>
            <person name="Harwood C.R."/>
            <person name="Henaut A."/>
            <person name="Hilbert H."/>
            <person name="Holsappel S."/>
            <person name="Hosono S."/>
            <person name="Hullo M.-F."/>
            <person name="Itaya M."/>
            <person name="Jones L.-M."/>
            <person name="Joris B."/>
            <person name="Karamata D."/>
            <person name="Kasahara Y."/>
            <person name="Klaerr-Blanchard M."/>
            <person name="Klein C."/>
            <person name="Kobayashi Y."/>
            <person name="Koetter P."/>
            <person name="Koningstein G."/>
            <person name="Krogh S."/>
            <person name="Kumano M."/>
            <person name="Kurita K."/>
            <person name="Lapidus A."/>
            <person name="Lardinois S."/>
            <person name="Lauber J."/>
            <person name="Lazarevic V."/>
            <person name="Lee S.-M."/>
            <person name="Levine A."/>
            <person name="Liu H."/>
            <person name="Masuda S."/>
            <person name="Mauel C."/>
            <person name="Medigue C."/>
            <person name="Medina N."/>
            <person name="Mellado R.P."/>
            <person name="Mizuno M."/>
            <person name="Moestl D."/>
            <person name="Nakai S."/>
            <person name="Noback M."/>
            <person name="Noone D."/>
            <person name="O'Reilly M."/>
            <person name="Ogawa K."/>
            <person name="Ogiwara A."/>
            <person name="Oudega B."/>
            <person name="Park S.-H."/>
            <person name="Parro V."/>
            <person name="Pohl T.M."/>
            <person name="Portetelle D."/>
            <person name="Porwollik S."/>
            <person name="Prescott A.M."/>
            <person name="Presecan E."/>
            <person name="Pujic P."/>
            <person name="Purnelle B."/>
            <person name="Rapoport G."/>
            <person name="Rey M."/>
            <person name="Reynolds S."/>
            <person name="Rieger M."/>
            <person name="Rivolta C."/>
            <person name="Rocha E."/>
            <person name="Roche B."/>
            <person name="Rose M."/>
            <person name="Sadaie Y."/>
            <person name="Sato T."/>
            <person name="Scanlan E."/>
            <person name="Schleich S."/>
            <person name="Schroeter R."/>
            <person name="Scoffone F."/>
            <person name="Sekiguchi J."/>
            <person name="Sekowska A."/>
            <person name="Seror S.J."/>
            <person name="Serror P."/>
            <person name="Shin B.-S."/>
            <person name="Soldo B."/>
            <person name="Sorokin A."/>
            <person name="Tacconi E."/>
            <person name="Takagi T."/>
            <person name="Takahashi H."/>
            <person name="Takemaru K."/>
            <person name="Takeuchi M."/>
            <person name="Tamakoshi A."/>
            <person name="Tanaka T."/>
            <person name="Terpstra P."/>
            <person name="Tognoni A."/>
            <person name="Tosato V."/>
            <person name="Uchiyama S."/>
            <person name="Vandenbol M."/>
            <person name="Vannier F."/>
            <person name="Vassarotti A."/>
            <person name="Viari A."/>
            <person name="Wambutt R."/>
            <person name="Wedler E."/>
            <person name="Wedler H."/>
            <person name="Weitzenegger T."/>
            <person name="Winters P."/>
            <person name="Wipat A."/>
            <person name="Yamamoto H."/>
            <person name="Yamane K."/>
            <person name="Yasumoto K."/>
            <person name="Yata K."/>
            <person name="Yoshida K."/>
            <person name="Yoshikawa H.-F."/>
            <person name="Zumstein E."/>
            <person name="Yoshikawa H."/>
            <person name="Danchin A."/>
        </authorList>
    </citation>
    <scope>NUCLEOTIDE SEQUENCE [LARGE SCALE GENOMIC DNA]</scope>
    <source>
        <strain>168</strain>
    </source>
</reference>